<feature type="chain" id="PRO_1000201244" description="UPF0502 protein YceH">
    <location>
        <begin position="1"/>
        <end position="215"/>
    </location>
</feature>
<feature type="modified residue" description="N6-acetyllysine" evidence="1">
    <location>
        <position position="80"/>
    </location>
</feature>
<name>YCEH_ECO45</name>
<dbReference type="EMBL" id="CU928161">
    <property type="protein sequence ID" value="CAR02408.1"/>
    <property type="molecule type" value="Genomic_DNA"/>
</dbReference>
<dbReference type="RefSeq" id="WP_000877109.1">
    <property type="nucleotide sequence ID" value="NC_011742.1"/>
</dbReference>
<dbReference type="SMR" id="B7MIK8"/>
<dbReference type="KEGG" id="ecz:ECS88_1081"/>
<dbReference type="HOGENOM" id="CLU_057831_2_0_6"/>
<dbReference type="Proteomes" id="UP000000747">
    <property type="component" value="Chromosome"/>
</dbReference>
<dbReference type="FunFam" id="1.10.10.10:FF:000196">
    <property type="entry name" value="UPF0502 protein YceH"/>
    <property type="match status" value="1"/>
</dbReference>
<dbReference type="FunFam" id="1.10.10.10:FF:000241">
    <property type="entry name" value="UPF0502 protein YceH"/>
    <property type="match status" value="1"/>
</dbReference>
<dbReference type="Gene3D" id="1.10.10.10">
    <property type="entry name" value="Winged helix-like DNA-binding domain superfamily/Winged helix DNA-binding domain"/>
    <property type="match status" value="2"/>
</dbReference>
<dbReference type="HAMAP" id="MF_01584">
    <property type="entry name" value="UPF0502"/>
    <property type="match status" value="1"/>
</dbReference>
<dbReference type="InterPro" id="IPR007432">
    <property type="entry name" value="DUF480"/>
</dbReference>
<dbReference type="InterPro" id="IPR036388">
    <property type="entry name" value="WH-like_DNA-bd_sf"/>
</dbReference>
<dbReference type="InterPro" id="IPR036390">
    <property type="entry name" value="WH_DNA-bd_sf"/>
</dbReference>
<dbReference type="NCBIfam" id="NF008413">
    <property type="entry name" value="PRK11239.1"/>
    <property type="match status" value="1"/>
</dbReference>
<dbReference type="PANTHER" id="PTHR38768">
    <property type="entry name" value="UPF0502 PROTEIN YCEH"/>
    <property type="match status" value="1"/>
</dbReference>
<dbReference type="PANTHER" id="PTHR38768:SF1">
    <property type="entry name" value="UPF0502 PROTEIN YCEH"/>
    <property type="match status" value="1"/>
</dbReference>
<dbReference type="Pfam" id="PF04337">
    <property type="entry name" value="DUF480"/>
    <property type="match status" value="1"/>
</dbReference>
<dbReference type="SUPFAM" id="SSF46785">
    <property type="entry name" value="Winged helix' DNA-binding domain"/>
    <property type="match status" value="2"/>
</dbReference>
<sequence>MKYQLTALEARVIGCLLEKQVTTPEQYPLSVNGVVTACNQKTNREPVMNLSESEVQEQLDNLVKRHYLRTVSGFGNRVTKYEQRFCNSEFGDLKLSAAEVALITTLLLRGAQTPGELRSRAARMYEFSDMAEVESTLEQLANREDGPFVVRLAREPGKRESRYMHLFSGEVEDQPAVMDMSNAVDGDLQARVEALEIEVAELKQRLDSLLAHLGD</sequence>
<gene>
    <name evidence="1" type="primary">yceH</name>
    <name type="ordered locus">ECS88_1081</name>
</gene>
<organism>
    <name type="scientific">Escherichia coli O45:K1 (strain S88 / ExPEC)</name>
    <dbReference type="NCBI Taxonomy" id="585035"/>
    <lineage>
        <taxon>Bacteria</taxon>
        <taxon>Pseudomonadati</taxon>
        <taxon>Pseudomonadota</taxon>
        <taxon>Gammaproteobacteria</taxon>
        <taxon>Enterobacterales</taxon>
        <taxon>Enterobacteriaceae</taxon>
        <taxon>Escherichia</taxon>
    </lineage>
</organism>
<evidence type="ECO:0000255" key="1">
    <source>
        <dbReference type="HAMAP-Rule" id="MF_01584"/>
    </source>
</evidence>
<keyword id="KW-0007">Acetylation</keyword>
<keyword id="KW-1185">Reference proteome</keyword>
<accession>B7MIK8</accession>
<protein>
    <recommendedName>
        <fullName evidence="1">UPF0502 protein YceH</fullName>
    </recommendedName>
</protein>
<reference key="1">
    <citation type="journal article" date="2009" name="PLoS Genet.">
        <title>Organised genome dynamics in the Escherichia coli species results in highly diverse adaptive paths.</title>
        <authorList>
            <person name="Touchon M."/>
            <person name="Hoede C."/>
            <person name="Tenaillon O."/>
            <person name="Barbe V."/>
            <person name="Baeriswyl S."/>
            <person name="Bidet P."/>
            <person name="Bingen E."/>
            <person name="Bonacorsi S."/>
            <person name="Bouchier C."/>
            <person name="Bouvet O."/>
            <person name="Calteau A."/>
            <person name="Chiapello H."/>
            <person name="Clermont O."/>
            <person name="Cruveiller S."/>
            <person name="Danchin A."/>
            <person name="Diard M."/>
            <person name="Dossat C."/>
            <person name="Karoui M.E."/>
            <person name="Frapy E."/>
            <person name="Garry L."/>
            <person name="Ghigo J.M."/>
            <person name="Gilles A.M."/>
            <person name="Johnson J."/>
            <person name="Le Bouguenec C."/>
            <person name="Lescat M."/>
            <person name="Mangenot S."/>
            <person name="Martinez-Jehanne V."/>
            <person name="Matic I."/>
            <person name="Nassif X."/>
            <person name="Oztas S."/>
            <person name="Petit M.A."/>
            <person name="Pichon C."/>
            <person name="Rouy Z."/>
            <person name="Ruf C.S."/>
            <person name="Schneider D."/>
            <person name="Tourret J."/>
            <person name="Vacherie B."/>
            <person name="Vallenet D."/>
            <person name="Medigue C."/>
            <person name="Rocha E.P.C."/>
            <person name="Denamur E."/>
        </authorList>
    </citation>
    <scope>NUCLEOTIDE SEQUENCE [LARGE SCALE GENOMIC DNA]</scope>
    <source>
        <strain>S88 / ExPEC</strain>
    </source>
</reference>
<proteinExistence type="inferred from homology"/>
<comment type="similarity">
    <text evidence="1">Belongs to the UPF0502 family.</text>
</comment>